<sequence>MGGLKKPKKKYLAGKPKKIWNKQLLLEELQLMGEYGLRNKKELWLARARLKWITRRARSLLSMTAEERAPLEMPFKEKLYKMGFIEDPNVQLDRILSLDVRAILERRLQTIVYRMGLAKSIHHARQLIVHGHVAVAGRRVTSPGFLVPRELEDKISLIQ</sequence>
<gene>
    <name evidence="1" type="primary">rps4</name>
    <name type="ordered locus">PAE3084</name>
</gene>
<feature type="chain" id="PRO_0000132516" description="Small ribosomal subunit protein uS4">
    <location>
        <begin position="1"/>
        <end position="159"/>
    </location>
</feature>
<feature type="domain" description="S4 RNA-binding" evidence="1">
    <location>
        <begin position="106"/>
        <end position="158"/>
    </location>
</feature>
<keyword id="KW-1185">Reference proteome</keyword>
<keyword id="KW-0687">Ribonucleoprotein</keyword>
<keyword id="KW-0689">Ribosomal protein</keyword>
<keyword id="KW-0694">RNA-binding</keyword>
<keyword id="KW-0699">rRNA-binding</keyword>
<protein>
    <recommendedName>
        <fullName evidence="1">Small ribosomal subunit protein uS4</fullName>
    </recommendedName>
    <alternativeName>
        <fullName evidence="2">30S ribosomal protein S4</fullName>
    </alternativeName>
</protein>
<organism>
    <name type="scientific">Pyrobaculum aerophilum (strain ATCC 51768 / DSM 7523 / JCM 9630 / CIP 104966 / NBRC 100827 / IM2)</name>
    <dbReference type="NCBI Taxonomy" id="178306"/>
    <lineage>
        <taxon>Archaea</taxon>
        <taxon>Thermoproteota</taxon>
        <taxon>Thermoprotei</taxon>
        <taxon>Thermoproteales</taxon>
        <taxon>Thermoproteaceae</taxon>
        <taxon>Pyrobaculum</taxon>
    </lineage>
</organism>
<name>RS4_PYRAE</name>
<dbReference type="EMBL" id="AE009441">
    <property type="protein sequence ID" value="AAL64658.1"/>
    <property type="molecule type" value="Genomic_DNA"/>
</dbReference>
<dbReference type="RefSeq" id="WP_011009126.1">
    <property type="nucleotide sequence ID" value="NC_003364.1"/>
</dbReference>
<dbReference type="SMR" id="Q8ZTV1"/>
<dbReference type="FunCoup" id="Q8ZTV1">
    <property type="interactions" value="184"/>
</dbReference>
<dbReference type="STRING" id="178306.PAE3084"/>
<dbReference type="EnsemblBacteria" id="AAL64658">
    <property type="protein sequence ID" value="AAL64658"/>
    <property type="gene ID" value="PAE3084"/>
</dbReference>
<dbReference type="GeneID" id="1463833"/>
<dbReference type="KEGG" id="pai:PAE3084"/>
<dbReference type="PATRIC" id="fig|178306.9.peg.2317"/>
<dbReference type="eggNOG" id="arCOG04239">
    <property type="taxonomic scope" value="Archaea"/>
</dbReference>
<dbReference type="HOGENOM" id="CLU_089738_1_1_2"/>
<dbReference type="InParanoid" id="Q8ZTV1"/>
<dbReference type="Proteomes" id="UP000002439">
    <property type="component" value="Chromosome"/>
</dbReference>
<dbReference type="GO" id="GO:0015935">
    <property type="term" value="C:small ribosomal subunit"/>
    <property type="evidence" value="ECO:0000318"/>
    <property type="project" value="GO_Central"/>
</dbReference>
<dbReference type="GO" id="GO:0019843">
    <property type="term" value="F:rRNA binding"/>
    <property type="evidence" value="ECO:0000318"/>
    <property type="project" value="GO_Central"/>
</dbReference>
<dbReference type="GO" id="GO:0003735">
    <property type="term" value="F:structural constituent of ribosome"/>
    <property type="evidence" value="ECO:0000318"/>
    <property type="project" value="GO_Central"/>
</dbReference>
<dbReference type="GO" id="GO:0042274">
    <property type="term" value="P:ribosomal small subunit biogenesis"/>
    <property type="evidence" value="ECO:0000318"/>
    <property type="project" value="GO_Central"/>
</dbReference>
<dbReference type="GO" id="GO:0006412">
    <property type="term" value="P:translation"/>
    <property type="evidence" value="ECO:0007669"/>
    <property type="project" value="UniProtKB-UniRule"/>
</dbReference>
<dbReference type="CDD" id="cd00165">
    <property type="entry name" value="S4"/>
    <property type="match status" value="1"/>
</dbReference>
<dbReference type="Gene3D" id="3.10.290.10">
    <property type="entry name" value="RNA-binding S4 domain"/>
    <property type="match status" value="1"/>
</dbReference>
<dbReference type="HAMAP" id="MF_01306_A">
    <property type="entry name" value="Ribosomal_uS4_A"/>
    <property type="match status" value="1"/>
</dbReference>
<dbReference type="InterPro" id="IPR022801">
    <property type="entry name" value="Ribosomal_uS4"/>
</dbReference>
<dbReference type="InterPro" id="IPR022802">
    <property type="entry name" value="Ribosomal_uS4_arc"/>
</dbReference>
<dbReference type="InterPro" id="IPR018079">
    <property type="entry name" value="Ribosomal_uS4_CS"/>
</dbReference>
<dbReference type="InterPro" id="IPR005710">
    <property type="entry name" value="Ribosomal_uS4_euk/arc"/>
</dbReference>
<dbReference type="InterPro" id="IPR001912">
    <property type="entry name" value="Ribosomal_uS4_N"/>
</dbReference>
<dbReference type="InterPro" id="IPR002942">
    <property type="entry name" value="S4_RNA-bd"/>
</dbReference>
<dbReference type="InterPro" id="IPR036986">
    <property type="entry name" value="S4_RNA-bd_sf"/>
</dbReference>
<dbReference type="NCBIfam" id="NF003139">
    <property type="entry name" value="PRK04051.1"/>
    <property type="match status" value="1"/>
</dbReference>
<dbReference type="NCBIfam" id="TIGR01018">
    <property type="entry name" value="uS4_arch"/>
    <property type="match status" value="1"/>
</dbReference>
<dbReference type="PANTHER" id="PTHR11831">
    <property type="entry name" value="30S 40S RIBOSOMAL PROTEIN"/>
    <property type="match status" value="1"/>
</dbReference>
<dbReference type="PANTHER" id="PTHR11831:SF5">
    <property type="entry name" value="40S RIBOSOMAL PROTEIN S9"/>
    <property type="match status" value="1"/>
</dbReference>
<dbReference type="Pfam" id="PF01479">
    <property type="entry name" value="S4"/>
    <property type="match status" value="1"/>
</dbReference>
<dbReference type="SMART" id="SM01390">
    <property type="entry name" value="Ribosomal_S4"/>
    <property type="match status" value="1"/>
</dbReference>
<dbReference type="SMART" id="SM00363">
    <property type="entry name" value="S4"/>
    <property type="match status" value="1"/>
</dbReference>
<dbReference type="SUPFAM" id="SSF55174">
    <property type="entry name" value="Alpha-L RNA-binding motif"/>
    <property type="match status" value="1"/>
</dbReference>
<dbReference type="PROSITE" id="PS00632">
    <property type="entry name" value="RIBOSOMAL_S4"/>
    <property type="match status" value="1"/>
</dbReference>
<dbReference type="PROSITE" id="PS50889">
    <property type="entry name" value="S4"/>
    <property type="match status" value="1"/>
</dbReference>
<proteinExistence type="inferred from homology"/>
<reference key="1">
    <citation type="journal article" date="2002" name="Proc. Natl. Acad. Sci. U.S.A.">
        <title>Genome sequence of the hyperthermophilic crenarchaeon Pyrobaculum aerophilum.</title>
        <authorList>
            <person name="Fitz-Gibbon S.T."/>
            <person name="Ladner H."/>
            <person name="Kim U.-J."/>
            <person name="Stetter K.O."/>
            <person name="Simon M.I."/>
            <person name="Miller J.H."/>
        </authorList>
    </citation>
    <scope>NUCLEOTIDE SEQUENCE [LARGE SCALE GENOMIC DNA]</scope>
    <source>
        <strain>ATCC 51768 / DSM 7523 / JCM 9630 / CIP 104966 / NBRC 100827 / IM2</strain>
    </source>
</reference>
<accession>Q8ZTV1</accession>
<comment type="function">
    <text evidence="1">One of the primary rRNA binding proteins, it binds directly to 16S rRNA where it nucleates assembly of the body of the 30S subunit.</text>
</comment>
<comment type="function">
    <text evidence="1">With S5 and S12 plays an important role in translational accuracy.</text>
</comment>
<comment type="subunit">
    <text evidence="1">Part of the 30S ribosomal subunit. Contacts protein S5. The interaction surface between S4 and S5 is involved in control of translational fidelity.</text>
</comment>
<comment type="similarity">
    <text evidence="1">Belongs to the universal ribosomal protein uS4 family.</text>
</comment>
<evidence type="ECO:0000255" key="1">
    <source>
        <dbReference type="HAMAP-Rule" id="MF_01306"/>
    </source>
</evidence>
<evidence type="ECO:0000305" key="2"/>